<comment type="function">
    <text evidence="1">Omega-conotoxins act at presynaptic membranes, they bind and block voltage-gated calcium channels (Cav).</text>
</comment>
<comment type="subcellular location">
    <subcellularLocation>
        <location evidence="1">Secreted</location>
    </subcellularLocation>
</comment>
<comment type="tissue specificity">
    <text>Expressed by the venom duct.</text>
</comment>
<comment type="domain">
    <text>The presence of a 'disulfide through disulfide knot' structurally defines this protein as a knottin.</text>
</comment>
<comment type="domain">
    <text>The cysteine framework is VI/VII (C-C-CC-C-C).</text>
</comment>
<comment type="similarity">
    <text evidence="3">Belongs to the conotoxin O1 superfamily.</text>
</comment>
<reference key="1">
    <citation type="journal article" date="2011" name="BMC Genomics">
        <title>Characterization of the Conus bullatus genome and its venom-duct transcriptome.</title>
        <authorList>
            <person name="Hu H."/>
            <person name="Bandyopadhyay P.K."/>
            <person name="Olivera B.M."/>
            <person name="Yandell M."/>
        </authorList>
    </citation>
    <scope>NUCLEOTIDE SEQUENCE [MRNA]</scope>
    <source>
        <tissue>Venom duct</tissue>
    </source>
</reference>
<name>O171_CONBU</name>
<protein>
    <recommendedName>
        <fullName>Omega-conotoxin-like Bu1</fullName>
    </recommendedName>
</protein>
<organism>
    <name type="scientific">Conus bullatus</name>
    <name type="common">Bubble cone</name>
    <dbReference type="NCBI Taxonomy" id="89438"/>
    <lineage>
        <taxon>Eukaryota</taxon>
        <taxon>Metazoa</taxon>
        <taxon>Spiralia</taxon>
        <taxon>Lophotrochozoa</taxon>
        <taxon>Mollusca</taxon>
        <taxon>Gastropoda</taxon>
        <taxon>Caenogastropoda</taxon>
        <taxon>Neogastropoda</taxon>
        <taxon>Conoidea</taxon>
        <taxon>Conidae</taxon>
        <taxon>Conus</taxon>
        <taxon>Textilia</taxon>
    </lineage>
</organism>
<feature type="signal peptide" evidence="2">
    <location>
        <begin position="1"/>
        <end position="22"/>
    </location>
</feature>
<feature type="propeptide" id="PRO_0000409935" evidence="1">
    <location>
        <begin position="23"/>
        <end position="45"/>
    </location>
</feature>
<feature type="peptide" id="PRO_0000409936" description="Omega-conotoxin-like Bu1">
    <location>
        <begin position="46"/>
        <end position="70"/>
    </location>
</feature>
<feature type="site" description="Important for calcium channel binding" evidence="1">
    <location>
        <position position="58"/>
    </location>
</feature>
<feature type="disulfide bond" evidence="1">
    <location>
        <begin position="46"/>
        <end position="61"/>
    </location>
</feature>
<feature type="disulfide bond" evidence="1">
    <location>
        <begin position="53"/>
        <end position="65"/>
    </location>
</feature>
<feature type="disulfide bond" evidence="1">
    <location>
        <begin position="60"/>
        <end position="70"/>
    </location>
</feature>
<accession>P0CY60</accession>
<dbReference type="SMR" id="P0CY60"/>
<dbReference type="GO" id="GO:0005576">
    <property type="term" value="C:extracellular region"/>
    <property type="evidence" value="ECO:0007669"/>
    <property type="project" value="UniProtKB-SubCell"/>
</dbReference>
<dbReference type="GO" id="GO:0044231">
    <property type="term" value="C:host cell presynaptic membrane"/>
    <property type="evidence" value="ECO:0007669"/>
    <property type="project" value="UniProtKB-KW"/>
</dbReference>
<dbReference type="GO" id="GO:0005246">
    <property type="term" value="F:calcium channel regulator activity"/>
    <property type="evidence" value="ECO:0007669"/>
    <property type="project" value="UniProtKB-KW"/>
</dbReference>
<dbReference type="GO" id="GO:0008200">
    <property type="term" value="F:ion channel inhibitor activity"/>
    <property type="evidence" value="ECO:0007669"/>
    <property type="project" value="InterPro"/>
</dbReference>
<dbReference type="GO" id="GO:0090729">
    <property type="term" value="F:toxin activity"/>
    <property type="evidence" value="ECO:0007669"/>
    <property type="project" value="UniProtKB-KW"/>
</dbReference>
<dbReference type="InterPro" id="IPR004214">
    <property type="entry name" value="Conotoxin"/>
</dbReference>
<dbReference type="Pfam" id="PF02950">
    <property type="entry name" value="Conotoxin"/>
    <property type="match status" value="1"/>
</dbReference>
<dbReference type="SUPFAM" id="SSF57059">
    <property type="entry name" value="omega toxin-like"/>
    <property type="match status" value="1"/>
</dbReference>
<evidence type="ECO:0000250" key="1"/>
<evidence type="ECO:0000255" key="2"/>
<evidence type="ECO:0000305" key="3"/>
<sequence length="70" mass="7656">MKLTCVAIVAVLLLTACQLITAEDSRGTQLHRALRKTTKLSVSTRCKGPGAKCLKTMYDCCKYSCSRGRC</sequence>
<keyword id="KW-0108">Calcium channel impairing toxin</keyword>
<keyword id="KW-1015">Disulfide bond</keyword>
<keyword id="KW-0872">Ion channel impairing toxin</keyword>
<keyword id="KW-0960">Knottin</keyword>
<keyword id="KW-0528">Neurotoxin</keyword>
<keyword id="KW-0638">Presynaptic neurotoxin</keyword>
<keyword id="KW-0964">Secreted</keyword>
<keyword id="KW-0732">Signal</keyword>
<keyword id="KW-0800">Toxin</keyword>
<keyword id="KW-1218">Voltage-gated calcium channel impairing toxin</keyword>
<proteinExistence type="evidence at transcript level"/>